<proteinExistence type="inferred from homology"/>
<comment type="function">
    <text evidence="1">Catalyzes the attachment of proline to tRNA(Pro) in a two-step reaction: proline is first activated by ATP to form Pro-AMP and then transferred to the acceptor end of tRNA(Pro). As ProRS can inadvertently accommodate and process non-cognate amino acids such as alanine and cysteine, to avoid such errors it has two additional distinct editing activities against alanine. One activity is designated as 'pretransfer' editing and involves the tRNA(Pro)-independent hydrolysis of activated Ala-AMP. The other activity is designated 'posttransfer' editing and involves deacylation of mischarged Ala-tRNA(Pro). The misacylated Cys-tRNA(Pro) is not edited by ProRS.</text>
</comment>
<comment type="catalytic activity">
    <reaction evidence="1">
        <text>tRNA(Pro) + L-proline + ATP = L-prolyl-tRNA(Pro) + AMP + diphosphate</text>
        <dbReference type="Rhea" id="RHEA:14305"/>
        <dbReference type="Rhea" id="RHEA-COMP:9700"/>
        <dbReference type="Rhea" id="RHEA-COMP:9702"/>
        <dbReference type="ChEBI" id="CHEBI:30616"/>
        <dbReference type="ChEBI" id="CHEBI:33019"/>
        <dbReference type="ChEBI" id="CHEBI:60039"/>
        <dbReference type="ChEBI" id="CHEBI:78442"/>
        <dbReference type="ChEBI" id="CHEBI:78532"/>
        <dbReference type="ChEBI" id="CHEBI:456215"/>
        <dbReference type="EC" id="6.1.1.15"/>
    </reaction>
</comment>
<comment type="subunit">
    <text evidence="1">Homodimer.</text>
</comment>
<comment type="subcellular location">
    <subcellularLocation>
        <location evidence="1">Cytoplasm</location>
    </subcellularLocation>
</comment>
<comment type="domain">
    <text evidence="1">Consists of three domains: the N-terminal catalytic domain, the editing domain and the C-terminal anticodon-binding domain.</text>
</comment>
<comment type="similarity">
    <text evidence="1">Belongs to the class-II aminoacyl-tRNA synthetase family. ProS type 1 subfamily.</text>
</comment>
<dbReference type="EC" id="6.1.1.15" evidence="1"/>
<dbReference type="EMBL" id="BX571856">
    <property type="protein sequence ID" value="CAG40241.1"/>
    <property type="molecule type" value="Genomic_DNA"/>
</dbReference>
<dbReference type="RefSeq" id="WP_000814087.1">
    <property type="nucleotide sequence ID" value="NC_002952.2"/>
</dbReference>
<dbReference type="SMR" id="Q6GHH2"/>
<dbReference type="KEGG" id="sar:SAR1239"/>
<dbReference type="HOGENOM" id="CLU_016739_0_0_9"/>
<dbReference type="Proteomes" id="UP000000596">
    <property type="component" value="Chromosome"/>
</dbReference>
<dbReference type="GO" id="GO:0005829">
    <property type="term" value="C:cytosol"/>
    <property type="evidence" value="ECO:0007669"/>
    <property type="project" value="TreeGrafter"/>
</dbReference>
<dbReference type="GO" id="GO:0002161">
    <property type="term" value="F:aminoacyl-tRNA deacylase activity"/>
    <property type="evidence" value="ECO:0007669"/>
    <property type="project" value="InterPro"/>
</dbReference>
<dbReference type="GO" id="GO:0005524">
    <property type="term" value="F:ATP binding"/>
    <property type="evidence" value="ECO:0007669"/>
    <property type="project" value="UniProtKB-UniRule"/>
</dbReference>
<dbReference type="GO" id="GO:0140096">
    <property type="term" value="F:catalytic activity, acting on a protein"/>
    <property type="evidence" value="ECO:0007669"/>
    <property type="project" value="UniProtKB-ARBA"/>
</dbReference>
<dbReference type="GO" id="GO:0004827">
    <property type="term" value="F:proline-tRNA ligase activity"/>
    <property type="evidence" value="ECO:0007669"/>
    <property type="project" value="UniProtKB-UniRule"/>
</dbReference>
<dbReference type="GO" id="GO:0016740">
    <property type="term" value="F:transferase activity"/>
    <property type="evidence" value="ECO:0007669"/>
    <property type="project" value="UniProtKB-ARBA"/>
</dbReference>
<dbReference type="GO" id="GO:0006433">
    <property type="term" value="P:prolyl-tRNA aminoacylation"/>
    <property type="evidence" value="ECO:0007669"/>
    <property type="project" value="UniProtKB-UniRule"/>
</dbReference>
<dbReference type="CDD" id="cd04334">
    <property type="entry name" value="ProRS-INS"/>
    <property type="match status" value="1"/>
</dbReference>
<dbReference type="CDD" id="cd00861">
    <property type="entry name" value="ProRS_anticodon_short"/>
    <property type="match status" value="1"/>
</dbReference>
<dbReference type="CDD" id="cd00779">
    <property type="entry name" value="ProRS_core_prok"/>
    <property type="match status" value="1"/>
</dbReference>
<dbReference type="FunFam" id="3.30.930.10:FF:000043">
    <property type="entry name" value="Proline--tRNA ligase"/>
    <property type="match status" value="1"/>
</dbReference>
<dbReference type="FunFam" id="3.40.50.800:FF:000011">
    <property type="entry name" value="Proline--tRNA ligase"/>
    <property type="match status" value="1"/>
</dbReference>
<dbReference type="Gene3D" id="3.40.50.800">
    <property type="entry name" value="Anticodon-binding domain"/>
    <property type="match status" value="1"/>
</dbReference>
<dbReference type="Gene3D" id="3.30.930.10">
    <property type="entry name" value="Bira Bifunctional Protein, Domain 2"/>
    <property type="match status" value="2"/>
</dbReference>
<dbReference type="HAMAP" id="MF_01569">
    <property type="entry name" value="Pro_tRNA_synth_type1"/>
    <property type="match status" value="1"/>
</dbReference>
<dbReference type="InterPro" id="IPR002314">
    <property type="entry name" value="aa-tRNA-synt_IIb"/>
</dbReference>
<dbReference type="InterPro" id="IPR006195">
    <property type="entry name" value="aa-tRNA-synth_II"/>
</dbReference>
<dbReference type="InterPro" id="IPR045864">
    <property type="entry name" value="aa-tRNA-synth_II/BPL/LPL"/>
</dbReference>
<dbReference type="InterPro" id="IPR004154">
    <property type="entry name" value="Anticodon-bd"/>
</dbReference>
<dbReference type="InterPro" id="IPR036621">
    <property type="entry name" value="Anticodon-bd_dom_sf"/>
</dbReference>
<dbReference type="InterPro" id="IPR002316">
    <property type="entry name" value="Pro-tRNA-ligase_IIa"/>
</dbReference>
<dbReference type="InterPro" id="IPR004500">
    <property type="entry name" value="Pro-tRNA-synth_IIa_bac-type"/>
</dbReference>
<dbReference type="InterPro" id="IPR023717">
    <property type="entry name" value="Pro-tRNA-Synthase_IIa_type1"/>
</dbReference>
<dbReference type="InterPro" id="IPR050062">
    <property type="entry name" value="Pro-tRNA_synthetase"/>
</dbReference>
<dbReference type="InterPro" id="IPR044140">
    <property type="entry name" value="ProRS_anticodon_short"/>
</dbReference>
<dbReference type="InterPro" id="IPR033730">
    <property type="entry name" value="ProRS_core_prok"/>
</dbReference>
<dbReference type="InterPro" id="IPR036754">
    <property type="entry name" value="YbaK/aa-tRNA-synt-asso_dom_sf"/>
</dbReference>
<dbReference type="InterPro" id="IPR007214">
    <property type="entry name" value="YbaK/aa-tRNA-synth-assoc-dom"/>
</dbReference>
<dbReference type="NCBIfam" id="NF006625">
    <property type="entry name" value="PRK09194.1"/>
    <property type="match status" value="1"/>
</dbReference>
<dbReference type="NCBIfam" id="TIGR00409">
    <property type="entry name" value="proS_fam_II"/>
    <property type="match status" value="1"/>
</dbReference>
<dbReference type="PANTHER" id="PTHR42753">
    <property type="entry name" value="MITOCHONDRIAL RIBOSOME PROTEIN L39/PROLYL-TRNA LIGASE FAMILY MEMBER"/>
    <property type="match status" value="1"/>
</dbReference>
<dbReference type="PANTHER" id="PTHR42753:SF2">
    <property type="entry name" value="PROLINE--TRNA LIGASE"/>
    <property type="match status" value="1"/>
</dbReference>
<dbReference type="Pfam" id="PF03129">
    <property type="entry name" value="HGTP_anticodon"/>
    <property type="match status" value="1"/>
</dbReference>
<dbReference type="Pfam" id="PF00587">
    <property type="entry name" value="tRNA-synt_2b"/>
    <property type="match status" value="1"/>
</dbReference>
<dbReference type="Pfam" id="PF04073">
    <property type="entry name" value="tRNA_edit"/>
    <property type="match status" value="1"/>
</dbReference>
<dbReference type="PRINTS" id="PR01046">
    <property type="entry name" value="TRNASYNTHPRO"/>
</dbReference>
<dbReference type="SUPFAM" id="SSF52954">
    <property type="entry name" value="Class II aaRS ABD-related"/>
    <property type="match status" value="1"/>
</dbReference>
<dbReference type="SUPFAM" id="SSF55681">
    <property type="entry name" value="Class II aaRS and biotin synthetases"/>
    <property type="match status" value="1"/>
</dbReference>
<dbReference type="SUPFAM" id="SSF55826">
    <property type="entry name" value="YbaK/ProRS associated domain"/>
    <property type="match status" value="1"/>
</dbReference>
<dbReference type="PROSITE" id="PS50862">
    <property type="entry name" value="AA_TRNA_LIGASE_II"/>
    <property type="match status" value="1"/>
</dbReference>
<protein>
    <recommendedName>
        <fullName evidence="1">Proline--tRNA ligase</fullName>
        <ecNumber evidence="1">6.1.1.15</ecNumber>
    </recommendedName>
    <alternativeName>
        <fullName evidence="1">Prolyl-tRNA synthetase</fullName>
        <shortName evidence="1">ProRS</shortName>
    </alternativeName>
</protein>
<feature type="chain" id="PRO_0000139341" description="Proline--tRNA ligase">
    <location>
        <begin position="1"/>
        <end position="567"/>
    </location>
</feature>
<name>SYP_STAAR</name>
<keyword id="KW-0030">Aminoacyl-tRNA synthetase</keyword>
<keyword id="KW-0067">ATP-binding</keyword>
<keyword id="KW-0963">Cytoplasm</keyword>
<keyword id="KW-0436">Ligase</keyword>
<keyword id="KW-0547">Nucleotide-binding</keyword>
<keyword id="KW-0648">Protein biosynthesis</keyword>
<sequence length="567" mass="63857">MKQSKVFIPTMRDVPSEAEAQSHRLLLKAGLIKQSTSGIYSYLPLATRVLNNITAIVRQEMERIDSVEILMPALQQAELWEESGRWGAYGPELMRLQDRHGRQFALGPTHEELVTSIVRNELKSYKQLPMTLFQIQSKFRDEKRPRFGLLRGREFIMKDAYSFHADEASLDQTYQDMYQAYSRIFERVGINARPVVADSGAIGGSHTHEFMALSAIGEDTIVYSKESDYAANIEKAEVVYEPNHKHTTVQPIEKIETPNVKTAQELADFLGRPVDEIVKTMIFKVDGEYIMVLVRGHHEINDIKLKSYFGTDNIELATQDEIVNLVGANPGSLGPVIDKEIKIYADNFVQDLNNLVVGANEDGYHLINVNVGRDFNVDEYGDFRFILEGEKLSDGSGVAHFAEGIEVGQVFKLGTKYSESMNATFLDNQGKAQPLIMGCYGIGISRTLSAIVEQNHDDNGIVWPKSVTPFDLHLISINPKKDDQRELADALYAEFNTKFDVLYDDRQERAGVKFNDADLIGLPLRIVVGKRASEGIVEVKERLTGDSEEVHIDDLMTVITNKYDNLK</sequence>
<reference key="1">
    <citation type="journal article" date="2004" name="Proc. Natl. Acad. Sci. U.S.A.">
        <title>Complete genomes of two clinical Staphylococcus aureus strains: evidence for the rapid evolution of virulence and drug resistance.</title>
        <authorList>
            <person name="Holden M.T.G."/>
            <person name="Feil E.J."/>
            <person name="Lindsay J.A."/>
            <person name="Peacock S.J."/>
            <person name="Day N.P.J."/>
            <person name="Enright M.C."/>
            <person name="Foster T.J."/>
            <person name="Moore C.E."/>
            <person name="Hurst L."/>
            <person name="Atkin R."/>
            <person name="Barron A."/>
            <person name="Bason N."/>
            <person name="Bentley S.D."/>
            <person name="Chillingworth C."/>
            <person name="Chillingworth T."/>
            <person name="Churcher C."/>
            <person name="Clark L."/>
            <person name="Corton C."/>
            <person name="Cronin A."/>
            <person name="Doggett J."/>
            <person name="Dowd L."/>
            <person name="Feltwell T."/>
            <person name="Hance Z."/>
            <person name="Harris B."/>
            <person name="Hauser H."/>
            <person name="Holroyd S."/>
            <person name="Jagels K."/>
            <person name="James K.D."/>
            <person name="Lennard N."/>
            <person name="Line A."/>
            <person name="Mayes R."/>
            <person name="Moule S."/>
            <person name="Mungall K."/>
            <person name="Ormond D."/>
            <person name="Quail M.A."/>
            <person name="Rabbinowitsch E."/>
            <person name="Rutherford K.M."/>
            <person name="Sanders M."/>
            <person name="Sharp S."/>
            <person name="Simmonds M."/>
            <person name="Stevens K."/>
            <person name="Whitehead S."/>
            <person name="Barrell B.G."/>
            <person name="Spratt B.G."/>
            <person name="Parkhill J."/>
        </authorList>
    </citation>
    <scope>NUCLEOTIDE SEQUENCE [LARGE SCALE GENOMIC DNA]</scope>
    <source>
        <strain>MRSA252</strain>
    </source>
</reference>
<accession>Q6GHH2</accession>
<organism>
    <name type="scientific">Staphylococcus aureus (strain MRSA252)</name>
    <dbReference type="NCBI Taxonomy" id="282458"/>
    <lineage>
        <taxon>Bacteria</taxon>
        <taxon>Bacillati</taxon>
        <taxon>Bacillota</taxon>
        <taxon>Bacilli</taxon>
        <taxon>Bacillales</taxon>
        <taxon>Staphylococcaceae</taxon>
        <taxon>Staphylococcus</taxon>
    </lineage>
</organism>
<evidence type="ECO:0000255" key="1">
    <source>
        <dbReference type="HAMAP-Rule" id="MF_01569"/>
    </source>
</evidence>
<gene>
    <name evidence="1" type="primary">proS</name>
    <name type="ordered locus">SAR1239</name>
</gene>